<accession>P14949</accession>
<accession>O07960</accession>
<accession>Q45687</accession>
<sequence length="104" mass="11393">MAIVKATDQSFSAETSEGVVLADFWAPWCGPCKMIAPVLEELDQEMGDKLKIVKIDVDENQETAGKYGVMSIPTLLVLKDGEVVETSVGFKPKEALQELVNKHL</sequence>
<evidence type="ECO:0000255" key="1">
    <source>
        <dbReference type="PROSITE-ProRule" id="PRU00691"/>
    </source>
</evidence>
<evidence type="ECO:0000269" key="2">
    <source>
    </source>
</evidence>
<evidence type="ECO:0000305" key="3"/>
<evidence type="ECO:0007829" key="4">
    <source>
        <dbReference type="PDB" id="2GZZ"/>
    </source>
</evidence>
<evidence type="ECO:0007829" key="5">
    <source>
        <dbReference type="PDB" id="2VOC"/>
    </source>
</evidence>
<name>THIO_BACSU</name>
<feature type="initiator methionine" description="Removed" evidence="2">
    <location>
        <position position="1"/>
    </location>
</feature>
<feature type="chain" id="PRO_0000120076" description="Thioredoxin">
    <location>
        <begin position="2"/>
        <end position="104"/>
    </location>
</feature>
<feature type="domain" description="Thioredoxin" evidence="1">
    <location>
        <begin position="2"/>
        <end position="104"/>
    </location>
</feature>
<feature type="disulfide bond" description="Redox-active" evidence="1">
    <location>
        <begin position="29"/>
        <end position="32"/>
    </location>
</feature>
<feature type="strand" evidence="4">
    <location>
        <begin position="3"/>
        <end position="6"/>
    </location>
</feature>
<feature type="turn" evidence="5">
    <location>
        <begin position="8"/>
        <end position="10"/>
    </location>
</feature>
<feature type="helix" evidence="5">
    <location>
        <begin position="11"/>
        <end position="15"/>
    </location>
</feature>
<feature type="strand" evidence="5">
    <location>
        <begin position="16"/>
        <end position="25"/>
    </location>
</feature>
<feature type="helix" evidence="5">
    <location>
        <begin position="30"/>
        <end position="34"/>
    </location>
</feature>
<feature type="helix" evidence="5">
    <location>
        <begin position="35"/>
        <end position="46"/>
    </location>
</feature>
<feature type="turn" evidence="5">
    <location>
        <begin position="47"/>
        <end position="49"/>
    </location>
</feature>
<feature type="strand" evidence="5">
    <location>
        <begin position="51"/>
        <end position="56"/>
    </location>
</feature>
<feature type="turn" evidence="5">
    <location>
        <begin position="57"/>
        <end position="59"/>
    </location>
</feature>
<feature type="helix" evidence="5">
    <location>
        <begin position="63"/>
        <end position="66"/>
    </location>
</feature>
<feature type="strand" evidence="5">
    <location>
        <begin position="71"/>
        <end position="79"/>
    </location>
</feature>
<feature type="strand" evidence="5">
    <location>
        <begin position="82"/>
        <end position="89"/>
    </location>
</feature>
<feature type="helix" evidence="5">
    <location>
        <begin position="93"/>
        <end position="101"/>
    </location>
</feature>
<dbReference type="EMBL" id="J03294">
    <property type="protein sequence ID" value="AAA87315.1"/>
    <property type="molecule type" value="Genomic_DNA"/>
</dbReference>
<dbReference type="EMBL" id="Z75208">
    <property type="protein sequence ID" value="CAA99577.1"/>
    <property type="molecule type" value="Genomic_DNA"/>
</dbReference>
<dbReference type="EMBL" id="AL009126">
    <property type="protein sequence ID" value="CAB14810.1"/>
    <property type="molecule type" value="Genomic_DNA"/>
</dbReference>
<dbReference type="EMBL" id="X79976">
    <property type="protein sequence ID" value="CAA56300.1"/>
    <property type="molecule type" value="Genomic_DNA"/>
</dbReference>
<dbReference type="EMBL" id="X99275">
    <property type="protein sequence ID" value="CAA67667.1"/>
    <property type="molecule type" value="Genomic_DNA"/>
</dbReference>
<dbReference type="PIR" id="B37192">
    <property type="entry name" value="B37192"/>
</dbReference>
<dbReference type="RefSeq" id="NP_390728.1">
    <property type="nucleotide sequence ID" value="NC_000964.3"/>
</dbReference>
<dbReference type="RefSeq" id="WP_003222500.1">
    <property type="nucleotide sequence ID" value="NZ_OZ025638.1"/>
</dbReference>
<dbReference type="PDB" id="2GZY">
    <property type="method" value="NMR"/>
    <property type="chains" value="A=1-104"/>
</dbReference>
<dbReference type="PDB" id="2GZZ">
    <property type="method" value="NMR"/>
    <property type="chains" value="A=1-104"/>
</dbReference>
<dbReference type="PDB" id="2IPA">
    <property type="method" value="NMR"/>
    <property type="chains" value="A=1-104"/>
</dbReference>
<dbReference type="PDB" id="2VOC">
    <property type="method" value="X-ray"/>
    <property type="resolution" value="1.50 A"/>
    <property type="chains" value="A/B=1-104"/>
</dbReference>
<dbReference type="PDBsum" id="2GZY"/>
<dbReference type="PDBsum" id="2GZZ"/>
<dbReference type="PDBsum" id="2IPA"/>
<dbReference type="PDBsum" id="2VOC"/>
<dbReference type="BMRB" id="P14949"/>
<dbReference type="SMR" id="P14949"/>
<dbReference type="FunCoup" id="P14949">
    <property type="interactions" value="547"/>
</dbReference>
<dbReference type="IntAct" id="P14949">
    <property type="interactions" value="1"/>
</dbReference>
<dbReference type="MINT" id="P14949"/>
<dbReference type="STRING" id="224308.BSU28500"/>
<dbReference type="jPOST" id="P14949"/>
<dbReference type="PaxDb" id="224308-BSU28500"/>
<dbReference type="EnsemblBacteria" id="CAB14810">
    <property type="protein sequence ID" value="CAB14810"/>
    <property type="gene ID" value="BSU_28500"/>
</dbReference>
<dbReference type="GeneID" id="76987683"/>
<dbReference type="GeneID" id="938187"/>
<dbReference type="KEGG" id="bsu:BSU28500"/>
<dbReference type="PATRIC" id="fig|224308.179.peg.3095"/>
<dbReference type="eggNOG" id="COG3118">
    <property type="taxonomic scope" value="Bacteria"/>
</dbReference>
<dbReference type="InParanoid" id="P14949"/>
<dbReference type="OrthoDB" id="9790390at2"/>
<dbReference type="PhylomeDB" id="P14949"/>
<dbReference type="BioCyc" id="BSUB:BSU28500-MONOMER"/>
<dbReference type="EvolutionaryTrace" id="P14949"/>
<dbReference type="PRO" id="PR:P14949"/>
<dbReference type="Proteomes" id="UP000001570">
    <property type="component" value="Chromosome"/>
</dbReference>
<dbReference type="GO" id="GO:0005737">
    <property type="term" value="C:cytoplasm"/>
    <property type="evidence" value="ECO:0000318"/>
    <property type="project" value="GO_Central"/>
</dbReference>
<dbReference type="GO" id="GO:0005829">
    <property type="term" value="C:cytosol"/>
    <property type="evidence" value="ECO:0000318"/>
    <property type="project" value="GO_Central"/>
</dbReference>
<dbReference type="GO" id="GO:0015035">
    <property type="term" value="F:protein-disulfide reductase activity"/>
    <property type="evidence" value="ECO:0000318"/>
    <property type="project" value="GO_Central"/>
</dbReference>
<dbReference type="GO" id="GO:0045454">
    <property type="term" value="P:cell redox homeostasis"/>
    <property type="evidence" value="ECO:0000318"/>
    <property type="project" value="GO_Central"/>
</dbReference>
<dbReference type="CDD" id="cd02947">
    <property type="entry name" value="TRX_family"/>
    <property type="match status" value="1"/>
</dbReference>
<dbReference type="FunFam" id="3.40.30.10:FF:000001">
    <property type="entry name" value="Thioredoxin"/>
    <property type="match status" value="1"/>
</dbReference>
<dbReference type="Gene3D" id="3.40.30.10">
    <property type="entry name" value="Glutaredoxin"/>
    <property type="match status" value="1"/>
</dbReference>
<dbReference type="InterPro" id="IPR005746">
    <property type="entry name" value="Thioredoxin"/>
</dbReference>
<dbReference type="InterPro" id="IPR036249">
    <property type="entry name" value="Thioredoxin-like_sf"/>
</dbReference>
<dbReference type="InterPro" id="IPR017937">
    <property type="entry name" value="Thioredoxin_CS"/>
</dbReference>
<dbReference type="InterPro" id="IPR013766">
    <property type="entry name" value="Thioredoxin_domain"/>
</dbReference>
<dbReference type="NCBIfam" id="TIGR01068">
    <property type="entry name" value="thioredoxin"/>
    <property type="match status" value="1"/>
</dbReference>
<dbReference type="PANTHER" id="PTHR45663">
    <property type="entry name" value="GEO12009P1"/>
    <property type="match status" value="1"/>
</dbReference>
<dbReference type="PANTHER" id="PTHR45663:SF11">
    <property type="entry name" value="GEO12009P1"/>
    <property type="match status" value="1"/>
</dbReference>
<dbReference type="Pfam" id="PF00085">
    <property type="entry name" value="Thioredoxin"/>
    <property type="match status" value="1"/>
</dbReference>
<dbReference type="PIRSF" id="PIRSF000077">
    <property type="entry name" value="Thioredoxin"/>
    <property type="match status" value="1"/>
</dbReference>
<dbReference type="PRINTS" id="PR00421">
    <property type="entry name" value="THIOREDOXIN"/>
</dbReference>
<dbReference type="SUPFAM" id="SSF52833">
    <property type="entry name" value="Thioredoxin-like"/>
    <property type="match status" value="1"/>
</dbReference>
<dbReference type="PROSITE" id="PS00194">
    <property type="entry name" value="THIOREDOXIN_1"/>
    <property type="match status" value="1"/>
</dbReference>
<dbReference type="PROSITE" id="PS51352">
    <property type="entry name" value="THIOREDOXIN_2"/>
    <property type="match status" value="1"/>
</dbReference>
<protein>
    <recommendedName>
        <fullName>Thioredoxin</fullName>
        <shortName>Trx</shortName>
    </recommendedName>
</protein>
<gene>
    <name type="primary">trxA</name>
    <name type="synonym">trx</name>
    <name type="ordered locus">BSU28500</name>
</gene>
<organism>
    <name type="scientific">Bacillus subtilis (strain 168)</name>
    <dbReference type="NCBI Taxonomy" id="224308"/>
    <lineage>
        <taxon>Bacteria</taxon>
        <taxon>Bacillati</taxon>
        <taxon>Bacillota</taxon>
        <taxon>Bacilli</taxon>
        <taxon>Bacillales</taxon>
        <taxon>Bacillaceae</taxon>
        <taxon>Bacillus</taxon>
    </lineage>
</organism>
<keyword id="KW-0002">3D-structure</keyword>
<keyword id="KW-0903">Direct protein sequencing</keyword>
<keyword id="KW-1015">Disulfide bond</keyword>
<keyword id="KW-0249">Electron transport</keyword>
<keyword id="KW-0676">Redox-active center</keyword>
<keyword id="KW-1185">Reference proteome</keyword>
<keyword id="KW-0813">Transport</keyword>
<proteinExistence type="evidence at protein level"/>
<reference key="1">
    <citation type="journal article" date="1989" name="J. Gen. Microbiol.">
        <title>Chromosomal location of the Bacillus subtilis aspartokinase II gene and nucleotide sequence of the adjacent genes homologous to uvrC and trx of Escherichia coli.</title>
        <authorList>
            <person name="Chen N.-Y."/>
            <person name="Zhang J.-J."/>
            <person name="Paulus H."/>
        </authorList>
    </citation>
    <scope>NUCLEOTIDE SEQUENCE [GENOMIC DNA]</scope>
</reference>
<reference key="2">
    <citation type="journal article" date="1996" name="Microbiology">
        <title>The dnaB-pheA (256 degrees-240 degrees) region of the Bacillus subtilis chromosome containing genes responsible for stress responses, the utilization of plant cell walls and primary metabolism.</title>
        <authorList>
            <person name="Wipat A."/>
            <person name="Carter N."/>
            <person name="Brignell C.S."/>
            <person name="Guy J.B."/>
            <person name="Piper K."/>
            <person name="Sanders J."/>
            <person name="Emmerson P.T."/>
            <person name="Harwood C.R."/>
        </authorList>
    </citation>
    <scope>NUCLEOTIDE SEQUENCE [GENOMIC DNA]</scope>
    <source>
        <strain>168</strain>
    </source>
</reference>
<reference key="3">
    <citation type="journal article" date="1997" name="Nature">
        <title>The complete genome sequence of the Gram-positive bacterium Bacillus subtilis.</title>
        <authorList>
            <person name="Kunst F."/>
            <person name="Ogasawara N."/>
            <person name="Moszer I."/>
            <person name="Albertini A.M."/>
            <person name="Alloni G."/>
            <person name="Azevedo V."/>
            <person name="Bertero M.G."/>
            <person name="Bessieres P."/>
            <person name="Bolotin A."/>
            <person name="Borchert S."/>
            <person name="Borriss R."/>
            <person name="Boursier L."/>
            <person name="Brans A."/>
            <person name="Braun M."/>
            <person name="Brignell S.C."/>
            <person name="Bron S."/>
            <person name="Brouillet S."/>
            <person name="Bruschi C.V."/>
            <person name="Caldwell B."/>
            <person name="Capuano V."/>
            <person name="Carter N.M."/>
            <person name="Choi S.-K."/>
            <person name="Codani J.-J."/>
            <person name="Connerton I.F."/>
            <person name="Cummings N.J."/>
            <person name="Daniel R.A."/>
            <person name="Denizot F."/>
            <person name="Devine K.M."/>
            <person name="Duesterhoeft A."/>
            <person name="Ehrlich S.D."/>
            <person name="Emmerson P.T."/>
            <person name="Entian K.-D."/>
            <person name="Errington J."/>
            <person name="Fabret C."/>
            <person name="Ferrari E."/>
            <person name="Foulger D."/>
            <person name="Fritz C."/>
            <person name="Fujita M."/>
            <person name="Fujita Y."/>
            <person name="Fuma S."/>
            <person name="Galizzi A."/>
            <person name="Galleron N."/>
            <person name="Ghim S.-Y."/>
            <person name="Glaser P."/>
            <person name="Goffeau A."/>
            <person name="Golightly E.J."/>
            <person name="Grandi G."/>
            <person name="Guiseppi G."/>
            <person name="Guy B.J."/>
            <person name="Haga K."/>
            <person name="Haiech J."/>
            <person name="Harwood C.R."/>
            <person name="Henaut A."/>
            <person name="Hilbert H."/>
            <person name="Holsappel S."/>
            <person name="Hosono S."/>
            <person name="Hullo M.-F."/>
            <person name="Itaya M."/>
            <person name="Jones L.-M."/>
            <person name="Joris B."/>
            <person name="Karamata D."/>
            <person name="Kasahara Y."/>
            <person name="Klaerr-Blanchard M."/>
            <person name="Klein C."/>
            <person name="Kobayashi Y."/>
            <person name="Koetter P."/>
            <person name="Koningstein G."/>
            <person name="Krogh S."/>
            <person name="Kumano M."/>
            <person name="Kurita K."/>
            <person name="Lapidus A."/>
            <person name="Lardinois S."/>
            <person name="Lauber J."/>
            <person name="Lazarevic V."/>
            <person name="Lee S.-M."/>
            <person name="Levine A."/>
            <person name="Liu H."/>
            <person name="Masuda S."/>
            <person name="Mauel C."/>
            <person name="Medigue C."/>
            <person name="Medina N."/>
            <person name="Mellado R.P."/>
            <person name="Mizuno M."/>
            <person name="Moestl D."/>
            <person name="Nakai S."/>
            <person name="Noback M."/>
            <person name="Noone D."/>
            <person name="O'Reilly M."/>
            <person name="Ogawa K."/>
            <person name="Ogiwara A."/>
            <person name="Oudega B."/>
            <person name="Park S.-H."/>
            <person name="Parro V."/>
            <person name="Pohl T.M."/>
            <person name="Portetelle D."/>
            <person name="Porwollik S."/>
            <person name="Prescott A.M."/>
            <person name="Presecan E."/>
            <person name="Pujic P."/>
            <person name="Purnelle B."/>
            <person name="Rapoport G."/>
            <person name="Rey M."/>
            <person name="Reynolds S."/>
            <person name="Rieger M."/>
            <person name="Rivolta C."/>
            <person name="Rocha E."/>
            <person name="Roche B."/>
            <person name="Rose M."/>
            <person name="Sadaie Y."/>
            <person name="Sato T."/>
            <person name="Scanlan E."/>
            <person name="Schleich S."/>
            <person name="Schroeter R."/>
            <person name="Scoffone F."/>
            <person name="Sekiguchi J."/>
            <person name="Sekowska A."/>
            <person name="Seror S.J."/>
            <person name="Serror P."/>
            <person name="Shin B.-S."/>
            <person name="Soldo B."/>
            <person name="Sorokin A."/>
            <person name="Tacconi E."/>
            <person name="Takagi T."/>
            <person name="Takahashi H."/>
            <person name="Takemaru K."/>
            <person name="Takeuchi M."/>
            <person name="Tamakoshi A."/>
            <person name="Tanaka T."/>
            <person name="Terpstra P."/>
            <person name="Tognoni A."/>
            <person name="Tosato V."/>
            <person name="Uchiyama S."/>
            <person name="Vandenbol M."/>
            <person name="Vannier F."/>
            <person name="Vassarotti A."/>
            <person name="Viari A."/>
            <person name="Wambutt R."/>
            <person name="Wedler E."/>
            <person name="Wedler H."/>
            <person name="Weitzenegger T."/>
            <person name="Winters P."/>
            <person name="Wipat A."/>
            <person name="Yamamoto H."/>
            <person name="Yamane K."/>
            <person name="Yasumoto K."/>
            <person name="Yata K."/>
            <person name="Yoshida K."/>
            <person name="Yoshikawa H.-F."/>
            <person name="Zumstein E."/>
            <person name="Yoshikawa H."/>
            <person name="Danchin A."/>
        </authorList>
    </citation>
    <scope>NUCLEOTIDE SEQUENCE [LARGE SCALE GENOMIC DNA]</scope>
    <source>
        <strain>168</strain>
    </source>
</reference>
<reference key="4">
    <citation type="journal article" date="1996" name="J. Bacteriol.">
        <title>Cold shock stress-induced proteins in Bacillus subtilis.</title>
        <authorList>
            <person name="Graumann P."/>
            <person name="Schroeder K."/>
            <person name="Schmid R."/>
            <person name="Marahiel M.A."/>
        </authorList>
    </citation>
    <scope>PROTEIN SEQUENCE OF 2-15</scope>
    <source>
        <strain>168 / JH642</strain>
    </source>
</reference>
<reference key="5">
    <citation type="submission" date="1994-11" db="EMBL/GenBank/DDBJ databases">
        <authorList>
            <person name="Riethdorf S."/>
            <person name="Winkler A."/>
            <person name="Voelker U."/>
            <person name="Ernst H."/>
            <person name="Scharf C."/>
            <person name="Hecker M."/>
        </authorList>
    </citation>
    <scope>NUCLEOTIDE SEQUENCE [GENOMIC DNA] OF 1-8</scope>
    <source>
        <strain>168</strain>
    </source>
</reference>
<comment type="function">
    <text>Participates in various redox reactions through the reversible oxidation of its active center dithiol to a disulfide and catalyzes dithiol-disulfide exchange reactions.</text>
</comment>
<comment type="similarity">
    <text evidence="3">Belongs to the thioredoxin family.</text>
</comment>